<protein>
    <recommendedName>
        <fullName>Cytochrome b</fullName>
    </recommendedName>
    <alternativeName>
        <fullName>Complex III subunit 3</fullName>
    </alternativeName>
    <alternativeName>
        <fullName>Complex III subunit III</fullName>
    </alternativeName>
    <alternativeName>
        <fullName>Cytochrome b-c1 complex subunit 3</fullName>
    </alternativeName>
    <alternativeName>
        <fullName>Ubiquinol-cytochrome-c reductase complex cytochrome b subunit</fullName>
    </alternativeName>
</protein>
<keyword id="KW-0249">Electron transport</keyword>
<keyword id="KW-0349">Heme</keyword>
<keyword id="KW-0408">Iron</keyword>
<keyword id="KW-0472">Membrane</keyword>
<keyword id="KW-0479">Metal-binding</keyword>
<keyword id="KW-0496">Mitochondrion</keyword>
<keyword id="KW-0999">Mitochondrion inner membrane</keyword>
<keyword id="KW-0679">Respiratory chain</keyword>
<keyword id="KW-0812">Transmembrane</keyword>
<keyword id="KW-1133">Transmembrane helix</keyword>
<keyword id="KW-0813">Transport</keyword>
<keyword id="KW-0830">Ubiquinone</keyword>
<organism>
    <name type="scientific">Blastocerus dichotomus</name>
    <name type="common">Marsh deer</name>
    <dbReference type="NCBI Taxonomy" id="248133"/>
    <lineage>
        <taxon>Eukaryota</taxon>
        <taxon>Metazoa</taxon>
        <taxon>Chordata</taxon>
        <taxon>Craniata</taxon>
        <taxon>Vertebrata</taxon>
        <taxon>Euteleostomi</taxon>
        <taxon>Mammalia</taxon>
        <taxon>Eutheria</taxon>
        <taxon>Laurasiatheria</taxon>
        <taxon>Artiodactyla</taxon>
        <taxon>Ruminantia</taxon>
        <taxon>Pecora</taxon>
        <taxon>Cervidae</taxon>
        <taxon>Odocoileinae</taxon>
        <taxon>Blastocerus</taxon>
    </lineage>
</organism>
<dbReference type="EMBL" id="AY607038">
    <property type="protein sequence ID" value="AAU08748.1"/>
    <property type="molecule type" value="Genomic_DNA"/>
</dbReference>
<dbReference type="SMR" id="Q5UVI6"/>
<dbReference type="GO" id="GO:0005743">
    <property type="term" value="C:mitochondrial inner membrane"/>
    <property type="evidence" value="ECO:0007669"/>
    <property type="project" value="UniProtKB-SubCell"/>
</dbReference>
<dbReference type="GO" id="GO:0045275">
    <property type="term" value="C:respiratory chain complex III"/>
    <property type="evidence" value="ECO:0007669"/>
    <property type="project" value="InterPro"/>
</dbReference>
<dbReference type="GO" id="GO:0046872">
    <property type="term" value="F:metal ion binding"/>
    <property type="evidence" value="ECO:0007669"/>
    <property type="project" value="UniProtKB-KW"/>
</dbReference>
<dbReference type="GO" id="GO:0008121">
    <property type="term" value="F:ubiquinol-cytochrome-c reductase activity"/>
    <property type="evidence" value="ECO:0007669"/>
    <property type="project" value="InterPro"/>
</dbReference>
<dbReference type="GO" id="GO:0006122">
    <property type="term" value="P:mitochondrial electron transport, ubiquinol to cytochrome c"/>
    <property type="evidence" value="ECO:0007669"/>
    <property type="project" value="TreeGrafter"/>
</dbReference>
<dbReference type="CDD" id="cd00290">
    <property type="entry name" value="cytochrome_b_C"/>
    <property type="match status" value="1"/>
</dbReference>
<dbReference type="CDD" id="cd00284">
    <property type="entry name" value="Cytochrome_b_N"/>
    <property type="match status" value="1"/>
</dbReference>
<dbReference type="FunFam" id="1.20.810.10:FF:000002">
    <property type="entry name" value="Cytochrome b"/>
    <property type="match status" value="1"/>
</dbReference>
<dbReference type="Gene3D" id="1.20.810.10">
    <property type="entry name" value="Cytochrome Bc1 Complex, Chain C"/>
    <property type="match status" value="1"/>
</dbReference>
<dbReference type="InterPro" id="IPR005798">
    <property type="entry name" value="Cyt_b/b6_C"/>
</dbReference>
<dbReference type="InterPro" id="IPR036150">
    <property type="entry name" value="Cyt_b/b6_C_sf"/>
</dbReference>
<dbReference type="InterPro" id="IPR005797">
    <property type="entry name" value="Cyt_b/b6_N"/>
</dbReference>
<dbReference type="InterPro" id="IPR027387">
    <property type="entry name" value="Cytb/b6-like_sf"/>
</dbReference>
<dbReference type="InterPro" id="IPR030689">
    <property type="entry name" value="Cytochrome_b"/>
</dbReference>
<dbReference type="InterPro" id="IPR048260">
    <property type="entry name" value="Cytochrome_b_C_euk/bac"/>
</dbReference>
<dbReference type="InterPro" id="IPR048259">
    <property type="entry name" value="Cytochrome_b_N_euk/bac"/>
</dbReference>
<dbReference type="InterPro" id="IPR016174">
    <property type="entry name" value="Di-haem_cyt_TM"/>
</dbReference>
<dbReference type="PANTHER" id="PTHR19271">
    <property type="entry name" value="CYTOCHROME B"/>
    <property type="match status" value="1"/>
</dbReference>
<dbReference type="PANTHER" id="PTHR19271:SF16">
    <property type="entry name" value="CYTOCHROME B"/>
    <property type="match status" value="1"/>
</dbReference>
<dbReference type="Pfam" id="PF00032">
    <property type="entry name" value="Cytochrom_B_C"/>
    <property type="match status" value="1"/>
</dbReference>
<dbReference type="Pfam" id="PF00033">
    <property type="entry name" value="Cytochrome_B"/>
    <property type="match status" value="1"/>
</dbReference>
<dbReference type="PIRSF" id="PIRSF038885">
    <property type="entry name" value="COB"/>
    <property type="match status" value="1"/>
</dbReference>
<dbReference type="SUPFAM" id="SSF81648">
    <property type="entry name" value="a domain/subunit of cytochrome bc1 complex (Ubiquinol-cytochrome c reductase)"/>
    <property type="match status" value="1"/>
</dbReference>
<dbReference type="SUPFAM" id="SSF81342">
    <property type="entry name" value="Transmembrane di-heme cytochromes"/>
    <property type="match status" value="1"/>
</dbReference>
<dbReference type="PROSITE" id="PS51003">
    <property type="entry name" value="CYTB_CTER"/>
    <property type="match status" value="1"/>
</dbReference>
<dbReference type="PROSITE" id="PS51002">
    <property type="entry name" value="CYTB_NTER"/>
    <property type="match status" value="1"/>
</dbReference>
<geneLocation type="mitochondrion"/>
<proteinExistence type="inferred from homology"/>
<name>CYB_BLADC</name>
<reference key="1">
    <citation type="journal article" date="2004" name="Mol. Phylogenet. Evol.">
        <title>Evolution and phylogeny of old world deer.</title>
        <authorList>
            <person name="Pitra C."/>
            <person name="Fickel J."/>
            <person name="Meijaard E."/>
            <person name="Groves P.C."/>
        </authorList>
    </citation>
    <scope>NUCLEOTIDE SEQUENCE [GENOMIC DNA]</scope>
</reference>
<feature type="chain" id="PRO_0000060676" description="Cytochrome b">
    <location>
        <begin position="1"/>
        <end position="379"/>
    </location>
</feature>
<feature type="transmembrane region" description="Helical" evidence="2">
    <location>
        <begin position="33"/>
        <end position="53"/>
    </location>
</feature>
<feature type="transmembrane region" description="Helical" evidence="2">
    <location>
        <begin position="77"/>
        <end position="98"/>
    </location>
</feature>
<feature type="transmembrane region" description="Helical" evidence="2">
    <location>
        <begin position="113"/>
        <end position="133"/>
    </location>
</feature>
<feature type="transmembrane region" description="Helical" evidence="2">
    <location>
        <begin position="178"/>
        <end position="198"/>
    </location>
</feature>
<feature type="transmembrane region" description="Helical" evidence="2">
    <location>
        <begin position="226"/>
        <end position="246"/>
    </location>
</feature>
<feature type="transmembrane region" description="Helical" evidence="2">
    <location>
        <begin position="288"/>
        <end position="308"/>
    </location>
</feature>
<feature type="transmembrane region" description="Helical" evidence="2">
    <location>
        <begin position="320"/>
        <end position="340"/>
    </location>
</feature>
<feature type="transmembrane region" description="Helical" evidence="2">
    <location>
        <begin position="347"/>
        <end position="367"/>
    </location>
</feature>
<feature type="binding site" description="axial binding residue" evidence="2">
    <location>
        <position position="83"/>
    </location>
    <ligand>
        <name>heme b</name>
        <dbReference type="ChEBI" id="CHEBI:60344"/>
        <label>b562</label>
    </ligand>
    <ligandPart>
        <name>Fe</name>
        <dbReference type="ChEBI" id="CHEBI:18248"/>
    </ligandPart>
</feature>
<feature type="binding site" description="axial binding residue" evidence="2">
    <location>
        <position position="97"/>
    </location>
    <ligand>
        <name>heme b</name>
        <dbReference type="ChEBI" id="CHEBI:60344"/>
        <label>b566</label>
    </ligand>
    <ligandPart>
        <name>Fe</name>
        <dbReference type="ChEBI" id="CHEBI:18248"/>
    </ligandPart>
</feature>
<feature type="binding site" description="axial binding residue" evidence="2">
    <location>
        <position position="196"/>
    </location>
    <ligand>
        <name>heme b</name>
        <dbReference type="ChEBI" id="CHEBI:60344"/>
        <label>b566</label>
    </ligand>
    <ligandPart>
        <name>Fe</name>
        <dbReference type="ChEBI" id="CHEBI:18248"/>
    </ligandPart>
</feature>
<feature type="binding site" evidence="2">
    <location>
        <position position="201"/>
    </location>
    <ligand>
        <name>a ubiquinone</name>
        <dbReference type="ChEBI" id="CHEBI:16389"/>
    </ligand>
</feature>
<evidence type="ECO:0000250" key="1"/>
<evidence type="ECO:0000250" key="2">
    <source>
        <dbReference type="UniProtKB" id="P00157"/>
    </source>
</evidence>
<evidence type="ECO:0000255" key="3">
    <source>
        <dbReference type="PROSITE-ProRule" id="PRU00967"/>
    </source>
</evidence>
<evidence type="ECO:0000255" key="4">
    <source>
        <dbReference type="PROSITE-ProRule" id="PRU00968"/>
    </source>
</evidence>
<sequence>MTNIRKTHPLMKIVNNAFIDLPTPSNISSWWNFGSLLGICLVLQILTGLFLAMHYSSDTTTAFSSVTHICRDVNYGWIIRYMHANGASMFFICLFMHVGRGLYYGSYNYLETWNIGVILLFTVMATAFVGYVLPWGQMSFWGATVITNLLSAIPYIGTNLVEWIWGGFSVDKATLTGFFAFPFILPFIIMALAMIHLLFLHETGSNNPTGIPSDTDKIPFHPYYTIKDILGALILILFLMLLVLFTPDLLGDPDNYTPANPLNTPPHIKPEWYFLFAYAILRSIPNKLGGVLALVLSILILILMPLLHMSKQRSMMFRPFSQCLFWILVADLLTLTWIGGQPVEHPFTIIGQLASILYFFIILVLMPITSMIENNLLKW</sequence>
<comment type="function">
    <text evidence="2">Component of the ubiquinol-cytochrome c reductase complex (complex III or cytochrome b-c1 complex) that is part of the mitochondrial respiratory chain. The b-c1 complex mediates electron transfer from ubiquinol to cytochrome c. Contributes to the generation of a proton gradient across the mitochondrial membrane that is then used for ATP synthesis.</text>
</comment>
<comment type="cofactor">
    <cofactor evidence="2">
        <name>heme b</name>
        <dbReference type="ChEBI" id="CHEBI:60344"/>
    </cofactor>
    <text evidence="2">Binds 2 heme b groups non-covalently.</text>
</comment>
<comment type="subunit">
    <text evidence="2">The cytochrome bc1 complex contains 11 subunits: 3 respiratory subunits (MT-CYB, CYC1 and UQCRFS1), 2 core proteins (UQCRC1 and UQCRC2) and 6 low-molecular weight proteins (UQCRH/QCR6, UQCRB/QCR7, UQCRQ/QCR8, UQCR10/QCR9, UQCR11/QCR10 and a cleavage product of UQCRFS1). This cytochrome bc1 complex then forms a dimer.</text>
</comment>
<comment type="subcellular location">
    <subcellularLocation>
        <location evidence="2">Mitochondrion inner membrane</location>
        <topology evidence="2">Multi-pass membrane protein</topology>
    </subcellularLocation>
</comment>
<comment type="miscellaneous">
    <text evidence="1">Heme 1 (or BL or b562) is low-potential and absorbs at about 562 nm, and heme 2 (or BH or b566) is high-potential and absorbs at about 566 nm.</text>
</comment>
<comment type="similarity">
    <text evidence="3 4">Belongs to the cytochrome b family.</text>
</comment>
<comment type="caution">
    <text evidence="2">The full-length protein contains only eight transmembrane helices, not nine as predicted by bioinformatics tools.</text>
</comment>
<accession>Q5UVI6</accession>
<gene>
    <name type="primary">MT-CYB</name>
    <name type="synonym">COB</name>
    <name type="synonym">CYTB</name>
    <name type="synonym">MTCYB</name>
</gene>